<evidence type="ECO:0000255" key="1">
    <source>
        <dbReference type="HAMAP-Rule" id="MF_01310"/>
    </source>
</evidence>
<evidence type="ECO:0000305" key="2"/>
<keyword id="KW-0687">Ribonucleoprotein</keyword>
<keyword id="KW-0689">Ribosomal protein</keyword>
<keyword id="KW-0694">RNA-binding</keyword>
<keyword id="KW-0699">rRNA-binding</keyword>
<organism>
    <name type="scientific">Deinococcus geothermalis (strain DSM 11300 / CIP 105573 / AG-3a)</name>
    <dbReference type="NCBI Taxonomy" id="319795"/>
    <lineage>
        <taxon>Bacteria</taxon>
        <taxon>Thermotogati</taxon>
        <taxon>Deinococcota</taxon>
        <taxon>Deinococci</taxon>
        <taxon>Deinococcales</taxon>
        <taxon>Deinococcaceae</taxon>
        <taxon>Deinococcus</taxon>
    </lineage>
</organism>
<feature type="chain" id="PRO_0000294745" description="Small ribosomal subunit protein uS11">
    <location>
        <begin position="1"/>
        <end position="131"/>
    </location>
</feature>
<dbReference type="EMBL" id="CP000359">
    <property type="protein sequence ID" value="ABF46137.1"/>
    <property type="molecule type" value="Genomic_DNA"/>
</dbReference>
<dbReference type="RefSeq" id="WP_011530967.1">
    <property type="nucleotide sequence ID" value="NC_008025.1"/>
</dbReference>
<dbReference type="SMR" id="Q1IX97"/>
<dbReference type="STRING" id="319795.Dgeo_1842"/>
<dbReference type="KEGG" id="dge:Dgeo_1842"/>
<dbReference type="eggNOG" id="COG0100">
    <property type="taxonomic scope" value="Bacteria"/>
</dbReference>
<dbReference type="HOGENOM" id="CLU_072439_5_0_0"/>
<dbReference type="Proteomes" id="UP000002431">
    <property type="component" value="Chromosome"/>
</dbReference>
<dbReference type="GO" id="GO:1990904">
    <property type="term" value="C:ribonucleoprotein complex"/>
    <property type="evidence" value="ECO:0007669"/>
    <property type="project" value="UniProtKB-KW"/>
</dbReference>
<dbReference type="GO" id="GO:0005840">
    <property type="term" value="C:ribosome"/>
    <property type="evidence" value="ECO:0007669"/>
    <property type="project" value="UniProtKB-KW"/>
</dbReference>
<dbReference type="GO" id="GO:0019843">
    <property type="term" value="F:rRNA binding"/>
    <property type="evidence" value="ECO:0007669"/>
    <property type="project" value="UniProtKB-UniRule"/>
</dbReference>
<dbReference type="GO" id="GO:0003735">
    <property type="term" value="F:structural constituent of ribosome"/>
    <property type="evidence" value="ECO:0007669"/>
    <property type="project" value="InterPro"/>
</dbReference>
<dbReference type="GO" id="GO:0006412">
    <property type="term" value="P:translation"/>
    <property type="evidence" value="ECO:0007669"/>
    <property type="project" value="UniProtKB-UniRule"/>
</dbReference>
<dbReference type="FunFam" id="3.30.420.80:FF:000010">
    <property type="entry name" value="30S ribosomal protein S11"/>
    <property type="match status" value="1"/>
</dbReference>
<dbReference type="Gene3D" id="3.30.420.80">
    <property type="entry name" value="Ribosomal protein S11"/>
    <property type="match status" value="1"/>
</dbReference>
<dbReference type="HAMAP" id="MF_01310">
    <property type="entry name" value="Ribosomal_uS11"/>
    <property type="match status" value="1"/>
</dbReference>
<dbReference type="InterPro" id="IPR001971">
    <property type="entry name" value="Ribosomal_uS11"/>
</dbReference>
<dbReference type="InterPro" id="IPR019981">
    <property type="entry name" value="Ribosomal_uS11_bac-type"/>
</dbReference>
<dbReference type="InterPro" id="IPR018102">
    <property type="entry name" value="Ribosomal_uS11_CS"/>
</dbReference>
<dbReference type="InterPro" id="IPR036967">
    <property type="entry name" value="Ribosomal_uS11_sf"/>
</dbReference>
<dbReference type="NCBIfam" id="NF003698">
    <property type="entry name" value="PRK05309.1"/>
    <property type="match status" value="1"/>
</dbReference>
<dbReference type="NCBIfam" id="TIGR03632">
    <property type="entry name" value="uS11_bact"/>
    <property type="match status" value="1"/>
</dbReference>
<dbReference type="PANTHER" id="PTHR11759">
    <property type="entry name" value="40S RIBOSOMAL PROTEIN S14/30S RIBOSOMAL PROTEIN S11"/>
    <property type="match status" value="1"/>
</dbReference>
<dbReference type="Pfam" id="PF00411">
    <property type="entry name" value="Ribosomal_S11"/>
    <property type="match status" value="1"/>
</dbReference>
<dbReference type="PIRSF" id="PIRSF002131">
    <property type="entry name" value="Ribosomal_S11"/>
    <property type="match status" value="1"/>
</dbReference>
<dbReference type="SUPFAM" id="SSF53137">
    <property type="entry name" value="Translational machinery components"/>
    <property type="match status" value="1"/>
</dbReference>
<dbReference type="PROSITE" id="PS00054">
    <property type="entry name" value="RIBOSOMAL_S11"/>
    <property type="match status" value="1"/>
</dbReference>
<name>RS11_DEIGD</name>
<accession>Q1IX97</accession>
<sequence length="131" mass="13877">MAKTTKGKTPRRARRNISAGRAYVHASYNNTIVTITDLDGNSVAWSSGGTIGYKGSKKGTPYAAQLAAADAVKKAQQAFGMNVVDVIVRGTGSGREQAIRAIQASGIEVKSIMDDSPVPHNGCRPKKKFRA</sequence>
<comment type="function">
    <text evidence="1">Located on the platform of the 30S subunit, it bridges several disparate RNA helices of the 16S rRNA. Forms part of the Shine-Dalgarno cleft in the 70S ribosome.</text>
</comment>
<comment type="subunit">
    <text evidence="1">Part of the 30S ribosomal subunit. Interacts with proteins S7 and S18. Binds to IF-3.</text>
</comment>
<comment type="similarity">
    <text evidence="1">Belongs to the universal ribosomal protein uS11 family.</text>
</comment>
<reference key="1">
    <citation type="submission" date="2006-04" db="EMBL/GenBank/DDBJ databases">
        <title>Complete sequence of chromosome of Deinococcus geothermalis DSM 11300.</title>
        <authorList>
            <person name="Copeland A."/>
            <person name="Lucas S."/>
            <person name="Lapidus A."/>
            <person name="Barry K."/>
            <person name="Detter J.C."/>
            <person name="Glavina del Rio T."/>
            <person name="Hammon N."/>
            <person name="Israni S."/>
            <person name="Dalin E."/>
            <person name="Tice H."/>
            <person name="Pitluck S."/>
            <person name="Brettin T."/>
            <person name="Bruce D."/>
            <person name="Han C."/>
            <person name="Tapia R."/>
            <person name="Saunders E."/>
            <person name="Gilna P."/>
            <person name="Schmutz J."/>
            <person name="Larimer F."/>
            <person name="Land M."/>
            <person name="Hauser L."/>
            <person name="Kyrpides N."/>
            <person name="Kim E."/>
            <person name="Daly M.J."/>
            <person name="Fredrickson J.K."/>
            <person name="Makarova K.S."/>
            <person name="Gaidamakova E.K."/>
            <person name="Zhai M."/>
            <person name="Richardson P."/>
        </authorList>
    </citation>
    <scope>NUCLEOTIDE SEQUENCE [LARGE SCALE GENOMIC DNA]</scope>
    <source>
        <strain>DSM 11300 / CIP 105573 / AG-3a</strain>
    </source>
</reference>
<gene>
    <name evidence="1" type="primary">rpsK</name>
    <name type="ordered locus">Dgeo_1842</name>
</gene>
<proteinExistence type="inferred from homology"/>
<protein>
    <recommendedName>
        <fullName evidence="1">Small ribosomal subunit protein uS11</fullName>
    </recommendedName>
    <alternativeName>
        <fullName evidence="2">30S ribosomal protein S11</fullName>
    </alternativeName>
</protein>